<evidence type="ECO:0000250" key="1"/>
<evidence type="ECO:0000305" key="2"/>
<sequence>MATIIQAKDLRAGHTFLYKGNIYQVIENSFNKTAMREGIVKCKVKNLRTGAITIEVLTGEKLEQAVIEKSKMTFSYDDGSGYVFMDNDTYEQISIPYSQLSWEKNFIEEGTEVSVMRYDGELMGVSLPDQLVVTIIEAEEAVQGNSVQNATKRAWLESKWEFQVPQFIKSGEKVIINPSNGQYVGRAK</sequence>
<dbReference type="EMBL" id="AF222894">
    <property type="protein sequence ID" value="AAF30707.1"/>
    <property type="molecule type" value="Genomic_DNA"/>
</dbReference>
<dbReference type="RefSeq" id="WP_006688853.1">
    <property type="nucleotide sequence ID" value="NC_002162.1"/>
</dbReference>
<dbReference type="SMR" id="Q9PQJ3"/>
<dbReference type="STRING" id="273119.UU298"/>
<dbReference type="EnsemblBacteria" id="AAF30707">
    <property type="protein sequence ID" value="AAF30707"/>
    <property type="gene ID" value="UU298"/>
</dbReference>
<dbReference type="GeneID" id="29672456"/>
<dbReference type="KEGG" id="uur:UU298"/>
<dbReference type="eggNOG" id="COG0231">
    <property type="taxonomic scope" value="Bacteria"/>
</dbReference>
<dbReference type="HOGENOM" id="CLU_074944_2_1_14"/>
<dbReference type="OrthoDB" id="9801844at2"/>
<dbReference type="UniPathway" id="UPA00345"/>
<dbReference type="Proteomes" id="UP000000423">
    <property type="component" value="Chromosome"/>
</dbReference>
<dbReference type="GO" id="GO:0005737">
    <property type="term" value="C:cytoplasm"/>
    <property type="evidence" value="ECO:0007669"/>
    <property type="project" value="UniProtKB-SubCell"/>
</dbReference>
<dbReference type="GO" id="GO:0003746">
    <property type="term" value="F:translation elongation factor activity"/>
    <property type="evidence" value="ECO:0007669"/>
    <property type="project" value="UniProtKB-UniRule"/>
</dbReference>
<dbReference type="GO" id="GO:0043043">
    <property type="term" value="P:peptide biosynthetic process"/>
    <property type="evidence" value="ECO:0007669"/>
    <property type="project" value="InterPro"/>
</dbReference>
<dbReference type="CDD" id="cd04470">
    <property type="entry name" value="S1_EF-P_repeat_1"/>
    <property type="match status" value="1"/>
</dbReference>
<dbReference type="CDD" id="cd05794">
    <property type="entry name" value="S1_EF-P_repeat_2"/>
    <property type="match status" value="1"/>
</dbReference>
<dbReference type="FunFam" id="2.40.50.140:FF:000004">
    <property type="entry name" value="Elongation factor P"/>
    <property type="match status" value="1"/>
</dbReference>
<dbReference type="FunFam" id="2.40.50.140:FF:000009">
    <property type="entry name" value="Elongation factor P"/>
    <property type="match status" value="1"/>
</dbReference>
<dbReference type="Gene3D" id="2.30.30.30">
    <property type="match status" value="1"/>
</dbReference>
<dbReference type="Gene3D" id="2.40.50.140">
    <property type="entry name" value="Nucleic acid-binding proteins"/>
    <property type="match status" value="2"/>
</dbReference>
<dbReference type="HAMAP" id="MF_00141">
    <property type="entry name" value="EF_P"/>
    <property type="match status" value="1"/>
</dbReference>
<dbReference type="InterPro" id="IPR015365">
    <property type="entry name" value="Elong-fact-P_C"/>
</dbReference>
<dbReference type="InterPro" id="IPR012340">
    <property type="entry name" value="NA-bd_OB-fold"/>
</dbReference>
<dbReference type="InterPro" id="IPR014722">
    <property type="entry name" value="Rib_uL2_dom2"/>
</dbReference>
<dbReference type="InterPro" id="IPR020599">
    <property type="entry name" value="Transl_elong_fac_P/YeiP"/>
</dbReference>
<dbReference type="InterPro" id="IPR013185">
    <property type="entry name" value="Transl_elong_KOW-like"/>
</dbReference>
<dbReference type="InterPro" id="IPR001059">
    <property type="entry name" value="Transl_elong_P/YeiP_cen"/>
</dbReference>
<dbReference type="InterPro" id="IPR011768">
    <property type="entry name" value="Transl_elongation_fac_P"/>
</dbReference>
<dbReference type="InterPro" id="IPR008991">
    <property type="entry name" value="Translation_prot_SH3-like_sf"/>
</dbReference>
<dbReference type="NCBIfam" id="TIGR00038">
    <property type="entry name" value="efp"/>
    <property type="match status" value="1"/>
</dbReference>
<dbReference type="NCBIfam" id="NF001810">
    <property type="entry name" value="PRK00529.1"/>
    <property type="match status" value="1"/>
</dbReference>
<dbReference type="PANTHER" id="PTHR30053">
    <property type="entry name" value="ELONGATION FACTOR P"/>
    <property type="match status" value="1"/>
</dbReference>
<dbReference type="PANTHER" id="PTHR30053:SF12">
    <property type="entry name" value="ELONGATION FACTOR P (EF-P) FAMILY PROTEIN"/>
    <property type="match status" value="1"/>
</dbReference>
<dbReference type="Pfam" id="PF01132">
    <property type="entry name" value="EFP"/>
    <property type="match status" value="1"/>
</dbReference>
<dbReference type="Pfam" id="PF08207">
    <property type="entry name" value="EFP_N"/>
    <property type="match status" value="1"/>
</dbReference>
<dbReference type="Pfam" id="PF09285">
    <property type="entry name" value="Elong-fact-P_C"/>
    <property type="match status" value="1"/>
</dbReference>
<dbReference type="PIRSF" id="PIRSF005901">
    <property type="entry name" value="EF-P"/>
    <property type="match status" value="1"/>
</dbReference>
<dbReference type="SMART" id="SM01185">
    <property type="entry name" value="EFP"/>
    <property type="match status" value="1"/>
</dbReference>
<dbReference type="SMART" id="SM00841">
    <property type="entry name" value="Elong-fact-P_C"/>
    <property type="match status" value="1"/>
</dbReference>
<dbReference type="SUPFAM" id="SSF50249">
    <property type="entry name" value="Nucleic acid-binding proteins"/>
    <property type="match status" value="2"/>
</dbReference>
<dbReference type="SUPFAM" id="SSF50104">
    <property type="entry name" value="Translation proteins SH3-like domain"/>
    <property type="match status" value="1"/>
</dbReference>
<accession>Q9PQJ3</accession>
<name>EFP_UREPA</name>
<comment type="function">
    <text evidence="1">Involved in peptide bond synthesis. Stimulates efficient translation and peptide-bond synthesis on native or reconstituted 70S ribosomes in vitro. Probably functions indirectly by altering the affinity of the ribosome for aminoacyl-tRNA, thus increasing their reactivity as acceptors for peptidyl transferase (By similarity).</text>
</comment>
<comment type="pathway">
    <text>Protein biosynthesis; polypeptide chain elongation.</text>
</comment>
<comment type="subcellular location">
    <subcellularLocation>
        <location evidence="1">Cytoplasm</location>
    </subcellularLocation>
</comment>
<comment type="similarity">
    <text evidence="2">Belongs to the elongation factor P family.</text>
</comment>
<proteinExistence type="inferred from homology"/>
<organism>
    <name type="scientific">Ureaplasma parvum serovar 3 (strain ATCC 700970)</name>
    <dbReference type="NCBI Taxonomy" id="273119"/>
    <lineage>
        <taxon>Bacteria</taxon>
        <taxon>Bacillati</taxon>
        <taxon>Mycoplasmatota</taxon>
        <taxon>Mycoplasmoidales</taxon>
        <taxon>Mycoplasmoidaceae</taxon>
        <taxon>Ureaplasma</taxon>
    </lineage>
</organism>
<protein>
    <recommendedName>
        <fullName>Elongation factor P</fullName>
        <shortName>EF-P</shortName>
    </recommendedName>
</protein>
<feature type="chain" id="PRO_0000094363" description="Elongation factor P">
    <location>
        <begin position="1"/>
        <end position="188"/>
    </location>
</feature>
<gene>
    <name type="primary">efp</name>
    <name type="ordered locus">UU298</name>
</gene>
<reference key="1">
    <citation type="journal article" date="2000" name="Nature">
        <title>The complete sequence of the mucosal pathogen Ureaplasma urealyticum.</title>
        <authorList>
            <person name="Glass J.I."/>
            <person name="Lefkowitz E.J."/>
            <person name="Glass J.S."/>
            <person name="Heiner C.R."/>
            <person name="Chen E.Y."/>
            <person name="Cassell G.H."/>
        </authorList>
    </citation>
    <scope>NUCLEOTIDE SEQUENCE [LARGE SCALE GENOMIC DNA]</scope>
    <source>
        <strain>ATCC 700970</strain>
    </source>
</reference>
<keyword id="KW-0963">Cytoplasm</keyword>
<keyword id="KW-0251">Elongation factor</keyword>
<keyword id="KW-0648">Protein biosynthesis</keyword>
<keyword id="KW-1185">Reference proteome</keyword>